<comment type="function">
    <text evidence="1">Catalyzes the oxidation of erythronate-4-phosphate to 3-hydroxy-2-oxo-4-phosphonooxybutanoate.</text>
</comment>
<comment type="catalytic activity">
    <reaction evidence="1">
        <text>4-phospho-D-erythronate + NAD(+) = (R)-3-hydroxy-2-oxo-4-phosphooxybutanoate + NADH + H(+)</text>
        <dbReference type="Rhea" id="RHEA:18829"/>
        <dbReference type="ChEBI" id="CHEBI:15378"/>
        <dbReference type="ChEBI" id="CHEBI:57540"/>
        <dbReference type="ChEBI" id="CHEBI:57945"/>
        <dbReference type="ChEBI" id="CHEBI:58538"/>
        <dbReference type="ChEBI" id="CHEBI:58766"/>
        <dbReference type="EC" id="1.1.1.290"/>
    </reaction>
</comment>
<comment type="pathway">
    <text evidence="1">Cofactor biosynthesis; pyridoxine 5'-phosphate biosynthesis; pyridoxine 5'-phosphate from D-erythrose 4-phosphate: step 2/5.</text>
</comment>
<comment type="subunit">
    <text evidence="1">Homodimer.</text>
</comment>
<comment type="subcellular location">
    <subcellularLocation>
        <location evidence="1">Cytoplasm</location>
    </subcellularLocation>
</comment>
<comment type="similarity">
    <text evidence="1">Belongs to the D-isomer specific 2-hydroxyacid dehydrogenase family. PdxB subfamily.</text>
</comment>
<keyword id="KW-0963">Cytoplasm</keyword>
<keyword id="KW-0520">NAD</keyword>
<keyword id="KW-0560">Oxidoreductase</keyword>
<keyword id="KW-0664">Pyridoxine biosynthesis</keyword>
<evidence type="ECO:0000255" key="1">
    <source>
        <dbReference type="HAMAP-Rule" id="MF_01825"/>
    </source>
</evidence>
<proteinExistence type="inferred from homology"/>
<gene>
    <name evidence="1" type="primary">pdxB</name>
    <name type="ordered locus">Spro_3336</name>
</gene>
<dbReference type="EC" id="1.1.1.290" evidence="1"/>
<dbReference type="EMBL" id="CP000826">
    <property type="protein sequence ID" value="ABV42434.1"/>
    <property type="molecule type" value="Genomic_DNA"/>
</dbReference>
<dbReference type="SMR" id="A8GH44"/>
<dbReference type="STRING" id="399741.Spro_3336"/>
<dbReference type="KEGG" id="spe:Spro_3336"/>
<dbReference type="eggNOG" id="COG0111">
    <property type="taxonomic scope" value="Bacteria"/>
</dbReference>
<dbReference type="HOGENOM" id="CLU_019796_4_0_6"/>
<dbReference type="OrthoDB" id="9770208at2"/>
<dbReference type="UniPathway" id="UPA00244">
    <property type="reaction ID" value="UER00310"/>
</dbReference>
<dbReference type="GO" id="GO:0005829">
    <property type="term" value="C:cytosol"/>
    <property type="evidence" value="ECO:0007669"/>
    <property type="project" value="TreeGrafter"/>
</dbReference>
<dbReference type="GO" id="GO:0033711">
    <property type="term" value="F:4-phosphoerythronate dehydrogenase activity"/>
    <property type="evidence" value="ECO:0007669"/>
    <property type="project" value="UniProtKB-EC"/>
</dbReference>
<dbReference type="GO" id="GO:0051287">
    <property type="term" value="F:NAD binding"/>
    <property type="evidence" value="ECO:0007669"/>
    <property type="project" value="InterPro"/>
</dbReference>
<dbReference type="GO" id="GO:0046983">
    <property type="term" value="F:protein dimerization activity"/>
    <property type="evidence" value="ECO:0007669"/>
    <property type="project" value="InterPro"/>
</dbReference>
<dbReference type="GO" id="GO:0036001">
    <property type="term" value="P:'de novo' pyridoxal 5'-phosphate biosynthetic process"/>
    <property type="evidence" value="ECO:0007669"/>
    <property type="project" value="TreeGrafter"/>
</dbReference>
<dbReference type="GO" id="GO:0008615">
    <property type="term" value="P:pyridoxine biosynthetic process"/>
    <property type="evidence" value="ECO:0007669"/>
    <property type="project" value="UniProtKB-UniRule"/>
</dbReference>
<dbReference type="CDD" id="cd12158">
    <property type="entry name" value="ErythrP_dh"/>
    <property type="match status" value="1"/>
</dbReference>
<dbReference type="FunFam" id="3.40.50.720:FF:000093">
    <property type="entry name" value="Erythronate-4-phosphate dehydrogenase"/>
    <property type="match status" value="1"/>
</dbReference>
<dbReference type="Gene3D" id="3.30.1370.170">
    <property type="match status" value="1"/>
</dbReference>
<dbReference type="Gene3D" id="3.40.50.720">
    <property type="entry name" value="NAD(P)-binding Rossmann-like Domain"/>
    <property type="match status" value="2"/>
</dbReference>
<dbReference type="HAMAP" id="MF_01825">
    <property type="entry name" value="PdxB"/>
    <property type="match status" value="1"/>
</dbReference>
<dbReference type="InterPro" id="IPR006139">
    <property type="entry name" value="D-isomer_2_OHA_DH_cat_dom"/>
</dbReference>
<dbReference type="InterPro" id="IPR029753">
    <property type="entry name" value="D-isomer_DH_CS"/>
</dbReference>
<dbReference type="InterPro" id="IPR029752">
    <property type="entry name" value="D-isomer_DH_CS1"/>
</dbReference>
<dbReference type="InterPro" id="IPR006140">
    <property type="entry name" value="D-isomer_DH_NAD-bd"/>
</dbReference>
<dbReference type="InterPro" id="IPR020921">
    <property type="entry name" value="Erythronate-4-P_DHase"/>
</dbReference>
<dbReference type="InterPro" id="IPR024531">
    <property type="entry name" value="Erythronate-4-P_DHase_dimer"/>
</dbReference>
<dbReference type="InterPro" id="IPR036291">
    <property type="entry name" value="NAD(P)-bd_dom_sf"/>
</dbReference>
<dbReference type="InterPro" id="IPR038251">
    <property type="entry name" value="PdxB_dimer_sf"/>
</dbReference>
<dbReference type="NCBIfam" id="NF001309">
    <property type="entry name" value="PRK00257.1"/>
    <property type="match status" value="1"/>
</dbReference>
<dbReference type="PANTHER" id="PTHR42938">
    <property type="entry name" value="FORMATE DEHYDROGENASE 1"/>
    <property type="match status" value="1"/>
</dbReference>
<dbReference type="PANTHER" id="PTHR42938:SF9">
    <property type="entry name" value="FORMATE DEHYDROGENASE 1"/>
    <property type="match status" value="1"/>
</dbReference>
<dbReference type="Pfam" id="PF00389">
    <property type="entry name" value="2-Hacid_dh"/>
    <property type="match status" value="1"/>
</dbReference>
<dbReference type="Pfam" id="PF02826">
    <property type="entry name" value="2-Hacid_dh_C"/>
    <property type="match status" value="1"/>
</dbReference>
<dbReference type="Pfam" id="PF11890">
    <property type="entry name" value="DUF3410"/>
    <property type="match status" value="1"/>
</dbReference>
<dbReference type="SUPFAM" id="SSF52283">
    <property type="entry name" value="Formate/glycerate dehydrogenase catalytic domain-like"/>
    <property type="match status" value="1"/>
</dbReference>
<dbReference type="SUPFAM" id="SSF51735">
    <property type="entry name" value="NAD(P)-binding Rossmann-fold domains"/>
    <property type="match status" value="1"/>
</dbReference>
<dbReference type="PROSITE" id="PS00065">
    <property type="entry name" value="D_2_HYDROXYACID_DH_1"/>
    <property type="match status" value="1"/>
</dbReference>
<dbReference type="PROSITE" id="PS00671">
    <property type="entry name" value="D_2_HYDROXYACID_DH_3"/>
    <property type="match status" value="1"/>
</dbReference>
<feature type="chain" id="PRO_1000088427" description="Erythronate-4-phosphate dehydrogenase">
    <location>
        <begin position="1"/>
        <end position="373"/>
    </location>
</feature>
<feature type="active site" evidence="1">
    <location>
        <position position="208"/>
    </location>
</feature>
<feature type="active site" evidence="1">
    <location>
        <position position="237"/>
    </location>
</feature>
<feature type="active site" description="Proton donor" evidence="1">
    <location>
        <position position="254"/>
    </location>
</feature>
<feature type="binding site" evidence="1">
    <location>
        <position position="45"/>
    </location>
    <ligand>
        <name>substrate</name>
    </ligand>
</feature>
<feature type="binding site" evidence="1">
    <location>
        <position position="66"/>
    </location>
    <ligand>
        <name>substrate</name>
    </ligand>
</feature>
<feature type="binding site" evidence="1">
    <location>
        <position position="146"/>
    </location>
    <ligand>
        <name>NAD(+)</name>
        <dbReference type="ChEBI" id="CHEBI:57540"/>
    </ligand>
</feature>
<feature type="binding site" evidence="1">
    <location>
        <position position="175"/>
    </location>
    <ligand>
        <name>NAD(+)</name>
        <dbReference type="ChEBI" id="CHEBI:57540"/>
    </ligand>
</feature>
<feature type="binding site" evidence="1">
    <location>
        <position position="232"/>
    </location>
    <ligand>
        <name>NAD(+)</name>
        <dbReference type="ChEBI" id="CHEBI:57540"/>
    </ligand>
</feature>
<feature type="binding site" evidence="1">
    <location>
        <position position="257"/>
    </location>
    <ligand>
        <name>NAD(+)</name>
        <dbReference type="ChEBI" id="CHEBI:57540"/>
    </ligand>
</feature>
<feature type="binding site" evidence="1">
    <location>
        <position position="258"/>
    </location>
    <ligand>
        <name>substrate</name>
    </ligand>
</feature>
<accession>A8GH44</accession>
<sequence length="373" mass="40634">MKILVDENMPYATELFSRLGNVQAVPGRPIPSDALADADALMVRSVTKVNEALLAGTRIGFVGTATAGTDHVDDVWLQQQGIGFSAAPGCNAIAVVEYVFSALMLLAERDGFQLRDKTVGIIGVGNVGSRLDARLKALGVRTLLCDPPRAERGDAGEFWPLEKLVAEADVLTFHTPLNKSGPYNSLHLVDAELLAALPDNRILINACRGAVVDNAALLQALEKGKKLSTVLDVWEPEPELSLPLLARVDIGTAHIAGYTLEGKARGTTQVFEAFSRHLGQPQQIELASLLPVPEFSQIQLNGPLDEGKLKRLMHLVYDVRRDDAPLRKVAGQPGEFDRLRKHYQERREWSSLRVQCDDSASAELLHKLGFLTA</sequence>
<name>PDXB_SERP5</name>
<organism>
    <name type="scientific">Serratia proteamaculans (strain 568)</name>
    <dbReference type="NCBI Taxonomy" id="399741"/>
    <lineage>
        <taxon>Bacteria</taxon>
        <taxon>Pseudomonadati</taxon>
        <taxon>Pseudomonadota</taxon>
        <taxon>Gammaproteobacteria</taxon>
        <taxon>Enterobacterales</taxon>
        <taxon>Yersiniaceae</taxon>
        <taxon>Serratia</taxon>
    </lineage>
</organism>
<reference key="1">
    <citation type="submission" date="2007-09" db="EMBL/GenBank/DDBJ databases">
        <title>Complete sequence of chromosome of Serratia proteamaculans 568.</title>
        <authorList>
            <consortium name="US DOE Joint Genome Institute"/>
            <person name="Copeland A."/>
            <person name="Lucas S."/>
            <person name="Lapidus A."/>
            <person name="Barry K."/>
            <person name="Glavina del Rio T."/>
            <person name="Dalin E."/>
            <person name="Tice H."/>
            <person name="Pitluck S."/>
            <person name="Chain P."/>
            <person name="Malfatti S."/>
            <person name="Shin M."/>
            <person name="Vergez L."/>
            <person name="Schmutz J."/>
            <person name="Larimer F."/>
            <person name="Land M."/>
            <person name="Hauser L."/>
            <person name="Kyrpides N."/>
            <person name="Kim E."/>
            <person name="Taghavi S."/>
            <person name="Newman L."/>
            <person name="Vangronsveld J."/>
            <person name="van der Lelie D."/>
            <person name="Richardson P."/>
        </authorList>
    </citation>
    <scope>NUCLEOTIDE SEQUENCE [LARGE SCALE GENOMIC DNA]</scope>
    <source>
        <strain>568</strain>
    </source>
</reference>
<protein>
    <recommendedName>
        <fullName evidence="1">Erythronate-4-phosphate dehydrogenase</fullName>
        <ecNumber evidence="1">1.1.1.290</ecNumber>
    </recommendedName>
</protein>